<sequence>MEASWLETRWARPLHLALVFCLALVLMQAMKLYLRRQRLLRDLSPFPGPPAHWLLGHQKFLQEDNMETLDEIVKKHPCAFPCWVGPFQAFFYIYDPDYAKIFLSRTDPKMQYLHQLLTPCIGRGLLNLDGPRWFQHRCLLTPAFHQDILKPCVDTMAHSVKVMLDKWEKMWTTQETTIEVFEHINLMTLDIIMKCAFGQETNCQINGTYESYVKATFELGEIISSRLYNFWHHHDIIFKLSPKGHCFQELGKVIHQYTEKIIQDRKKILKNQVKQDDTQTSQIFLDIVLSAQAEDERAFSDADLRAEVNTFMWAGHDASAASISWLLYCLALNPEHQDRCRTEIRSILGDGSSITWEQLDEMSYTTMCIKETLRLIPPVPSISRELSKPLTLPDGHSLPAGMTVVLSIWGLHHNPAVWNDPKVFDPLRFTKENSDQRHPCAFLPFSSGPRNCIGQQFAMLELKVAIALILLHFQVAPDLTRPPAFSSHTVLRPKHGIYLHLKKLLEC</sequence>
<protein>
    <recommendedName>
        <fullName evidence="6">Cytochrome P450 4X1</fullName>
        <ecNumber evidence="3">1.14.14.-</ecNumber>
    </recommendedName>
    <alternativeName>
        <fullName>CYPIVX1</fullName>
    </alternativeName>
</protein>
<keyword id="KW-0256">Endoplasmic reticulum</keyword>
<keyword id="KW-0349">Heme</keyword>
<keyword id="KW-0408">Iron</keyword>
<keyword id="KW-0443">Lipid metabolism</keyword>
<keyword id="KW-0472">Membrane</keyword>
<keyword id="KW-0479">Metal-binding</keyword>
<keyword id="KW-0492">Microsome</keyword>
<keyword id="KW-0503">Monooxygenase</keyword>
<keyword id="KW-0560">Oxidoreductase</keyword>
<keyword id="KW-1185">Reference proteome</keyword>
<keyword id="KW-0812">Transmembrane</keyword>
<keyword id="KW-1133">Transmembrane helix</keyword>
<reference key="1">
    <citation type="journal article" date="2006" name="FEBS J.">
        <title>Cytochrome P450 Cyp4x1 is a major P450 protein in mouse brain.</title>
        <authorList>
            <person name="Al-Anizy M."/>
            <person name="Horley N.J."/>
            <person name="Kuo C.W."/>
            <person name="Gillett L.C."/>
            <person name="Laughton C.A."/>
            <person name="Kendall D."/>
            <person name="Barrett D.A."/>
            <person name="Parker T."/>
            <person name="Bell D.R."/>
        </authorList>
    </citation>
    <scope>NUCLEOTIDE SEQUENCE [MRNA]</scope>
    <scope>SUBCELLULAR LOCATION</scope>
    <scope>TISSUE SPECIFICITY</scope>
    <source>
        <strain>129</strain>
        <tissue>Brain</tissue>
    </source>
</reference>
<reference key="2">
    <citation type="journal article" date="2009" name="PLoS Biol.">
        <title>Lineage-specific biology revealed by a finished genome assembly of the mouse.</title>
        <authorList>
            <person name="Church D.M."/>
            <person name="Goodstadt L."/>
            <person name="Hillier L.W."/>
            <person name="Zody M.C."/>
            <person name="Goldstein S."/>
            <person name="She X."/>
            <person name="Bult C.J."/>
            <person name="Agarwala R."/>
            <person name="Cherry J.L."/>
            <person name="DiCuccio M."/>
            <person name="Hlavina W."/>
            <person name="Kapustin Y."/>
            <person name="Meric P."/>
            <person name="Maglott D."/>
            <person name="Birtle Z."/>
            <person name="Marques A.C."/>
            <person name="Graves T."/>
            <person name="Zhou S."/>
            <person name="Teague B."/>
            <person name="Potamousis K."/>
            <person name="Churas C."/>
            <person name="Place M."/>
            <person name="Herschleb J."/>
            <person name="Runnheim R."/>
            <person name="Forrest D."/>
            <person name="Amos-Landgraf J."/>
            <person name="Schwartz D.C."/>
            <person name="Cheng Z."/>
            <person name="Lindblad-Toh K."/>
            <person name="Eichler E.E."/>
            <person name="Ponting C.P."/>
        </authorList>
    </citation>
    <scope>NUCLEOTIDE SEQUENCE [LARGE SCALE GENOMIC DNA]</scope>
    <source>
        <strain>C57BL/6J</strain>
    </source>
</reference>
<reference key="3">
    <citation type="journal article" date="2004" name="Genome Res.">
        <title>The status, quality, and expansion of the NIH full-length cDNA project: the Mammalian Gene Collection (MGC).</title>
        <authorList>
            <consortium name="The MGC Project Team"/>
        </authorList>
    </citation>
    <scope>NUCLEOTIDE SEQUENCE [LARGE SCALE MRNA] OF 2-507</scope>
</reference>
<reference key="4">
    <citation type="journal article" date="2005" name="Science">
        <title>The transcriptional landscape of the mammalian genome.</title>
        <authorList>
            <person name="Carninci P."/>
            <person name="Kasukawa T."/>
            <person name="Katayama S."/>
            <person name="Gough J."/>
            <person name="Frith M.C."/>
            <person name="Maeda N."/>
            <person name="Oyama R."/>
            <person name="Ravasi T."/>
            <person name="Lenhard B."/>
            <person name="Wells C."/>
            <person name="Kodzius R."/>
            <person name="Shimokawa K."/>
            <person name="Bajic V.B."/>
            <person name="Brenner S.E."/>
            <person name="Batalov S."/>
            <person name="Forrest A.R."/>
            <person name="Zavolan M."/>
            <person name="Davis M.J."/>
            <person name="Wilming L.G."/>
            <person name="Aidinis V."/>
            <person name="Allen J.E."/>
            <person name="Ambesi-Impiombato A."/>
            <person name="Apweiler R."/>
            <person name="Aturaliya R.N."/>
            <person name="Bailey T.L."/>
            <person name="Bansal M."/>
            <person name="Baxter L."/>
            <person name="Beisel K.W."/>
            <person name="Bersano T."/>
            <person name="Bono H."/>
            <person name="Chalk A.M."/>
            <person name="Chiu K.P."/>
            <person name="Choudhary V."/>
            <person name="Christoffels A."/>
            <person name="Clutterbuck D.R."/>
            <person name="Crowe M.L."/>
            <person name="Dalla E."/>
            <person name="Dalrymple B.P."/>
            <person name="de Bono B."/>
            <person name="Della Gatta G."/>
            <person name="di Bernardo D."/>
            <person name="Down T."/>
            <person name="Engstrom P."/>
            <person name="Fagiolini M."/>
            <person name="Faulkner G."/>
            <person name="Fletcher C.F."/>
            <person name="Fukushima T."/>
            <person name="Furuno M."/>
            <person name="Futaki S."/>
            <person name="Gariboldi M."/>
            <person name="Georgii-Hemming P."/>
            <person name="Gingeras T.R."/>
            <person name="Gojobori T."/>
            <person name="Green R.E."/>
            <person name="Gustincich S."/>
            <person name="Harbers M."/>
            <person name="Hayashi Y."/>
            <person name="Hensch T.K."/>
            <person name="Hirokawa N."/>
            <person name="Hill D."/>
            <person name="Huminiecki L."/>
            <person name="Iacono M."/>
            <person name="Ikeo K."/>
            <person name="Iwama A."/>
            <person name="Ishikawa T."/>
            <person name="Jakt M."/>
            <person name="Kanapin A."/>
            <person name="Katoh M."/>
            <person name="Kawasawa Y."/>
            <person name="Kelso J."/>
            <person name="Kitamura H."/>
            <person name="Kitano H."/>
            <person name="Kollias G."/>
            <person name="Krishnan S.P."/>
            <person name="Kruger A."/>
            <person name="Kummerfeld S.K."/>
            <person name="Kurochkin I.V."/>
            <person name="Lareau L.F."/>
            <person name="Lazarevic D."/>
            <person name="Lipovich L."/>
            <person name="Liu J."/>
            <person name="Liuni S."/>
            <person name="McWilliam S."/>
            <person name="Madan Babu M."/>
            <person name="Madera M."/>
            <person name="Marchionni L."/>
            <person name="Matsuda H."/>
            <person name="Matsuzawa S."/>
            <person name="Miki H."/>
            <person name="Mignone F."/>
            <person name="Miyake S."/>
            <person name="Morris K."/>
            <person name="Mottagui-Tabar S."/>
            <person name="Mulder N."/>
            <person name="Nakano N."/>
            <person name="Nakauchi H."/>
            <person name="Ng P."/>
            <person name="Nilsson R."/>
            <person name="Nishiguchi S."/>
            <person name="Nishikawa S."/>
            <person name="Nori F."/>
            <person name="Ohara O."/>
            <person name="Okazaki Y."/>
            <person name="Orlando V."/>
            <person name="Pang K.C."/>
            <person name="Pavan W.J."/>
            <person name="Pavesi G."/>
            <person name="Pesole G."/>
            <person name="Petrovsky N."/>
            <person name="Piazza S."/>
            <person name="Reed J."/>
            <person name="Reid J.F."/>
            <person name="Ring B.Z."/>
            <person name="Ringwald M."/>
            <person name="Rost B."/>
            <person name="Ruan Y."/>
            <person name="Salzberg S.L."/>
            <person name="Sandelin A."/>
            <person name="Schneider C."/>
            <person name="Schoenbach C."/>
            <person name="Sekiguchi K."/>
            <person name="Semple C.A."/>
            <person name="Seno S."/>
            <person name="Sessa L."/>
            <person name="Sheng Y."/>
            <person name="Shibata Y."/>
            <person name="Shimada H."/>
            <person name="Shimada K."/>
            <person name="Silva D."/>
            <person name="Sinclair B."/>
            <person name="Sperling S."/>
            <person name="Stupka E."/>
            <person name="Sugiura K."/>
            <person name="Sultana R."/>
            <person name="Takenaka Y."/>
            <person name="Taki K."/>
            <person name="Tammoja K."/>
            <person name="Tan S.L."/>
            <person name="Tang S."/>
            <person name="Taylor M.S."/>
            <person name="Tegner J."/>
            <person name="Teichmann S.A."/>
            <person name="Ueda H.R."/>
            <person name="van Nimwegen E."/>
            <person name="Verardo R."/>
            <person name="Wei C.L."/>
            <person name="Yagi K."/>
            <person name="Yamanishi H."/>
            <person name="Zabarovsky E."/>
            <person name="Zhu S."/>
            <person name="Zimmer A."/>
            <person name="Hide W."/>
            <person name="Bult C."/>
            <person name="Grimmond S.M."/>
            <person name="Teasdale R.D."/>
            <person name="Liu E.T."/>
            <person name="Brusic V."/>
            <person name="Quackenbush J."/>
            <person name="Wahlestedt C."/>
            <person name="Mattick J.S."/>
            <person name="Hume D.A."/>
            <person name="Kai C."/>
            <person name="Sasaki D."/>
            <person name="Tomaru Y."/>
            <person name="Fukuda S."/>
            <person name="Kanamori-Katayama M."/>
            <person name="Suzuki M."/>
            <person name="Aoki J."/>
            <person name="Arakawa T."/>
            <person name="Iida J."/>
            <person name="Imamura K."/>
            <person name="Itoh M."/>
            <person name="Kato T."/>
            <person name="Kawaji H."/>
            <person name="Kawagashira N."/>
            <person name="Kawashima T."/>
            <person name="Kojima M."/>
            <person name="Kondo S."/>
            <person name="Konno H."/>
            <person name="Nakano K."/>
            <person name="Ninomiya N."/>
            <person name="Nishio T."/>
            <person name="Okada M."/>
            <person name="Plessy C."/>
            <person name="Shibata K."/>
            <person name="Shiraki T."/>
            <person name="Suzuki S."/>
            <person name="Tagami M."/>
            <person name="Waki K."/>
            <person name="Watahiki A."/>
            <person name="Okamura-Oho Y."/>
            <person name="Suzuki H."/>
            <person name="Kawai J."/>
            <person name="Hayashizaki Y."/>
        </authorList>
    </citation>
    <scope>NUCLEOTIDE SEQUENCE [LARGE SCALE MRNA] OF 9-507</scope>
    <source>
        <strain>C57BL/6J</strain>
        <tissue>Hypothalamus</tissue>
    </source>
</reference>
<proteinExistence type="evidence at protein level"/>
<comment type="function">
    <text evidence="3">A cytochrome P450 monooxygenase that selectively catalyzes the epoxidation of the last double bond of the arachidonoyl moiety of anandamide, potentially modulating endocannabinoid signaling. Has no hydroxylase activity toward various fatty acids, steroids and prostaglandins. Mechanistically, uses molecular oxygen inserting one oxygen atom into a substrate, and reducing the second into a water molecule, with two electrons provided by NADPH via cytochrome P450 reductase (CPR; NADPH-ferrihemoprotein reductase).</text>
</comment>
<comment type="catalytic activity">
    <reaction evidence="3">
        <text>N-(5Z,8Z,11Z,14Z-eicosatetraenoyl)-ethanolamine + reduced [NADPH--hemoprotein reductase] + O2 = N-(14,15-epoxy-5Z,8Z,11Z-eicosatrienoyl)-ethanolamine + oxidized [NADPH--hemoprotein reductase] + H2O + H(+)</text>
        <dbReference type="Rhea" id="RHEA:53148"/>
        <dbReference type="Rhea" id="RHEA-COMP:11964"/>
        <dbReference type="Rhea" id="RHEA-COMP:11965"/>
        <dbReference type="ChEBI" id="CHEBI:2700"/>
        <dbReference type="ChEBI" id="CHEBI:15377"/>
        <dbReference type="ChEBI" id="CHEBI:15378"/>
        <dbReference type="ChEBI" id="CHEBI:15379"/>
        <dbReference type="ChEBI" id="CHEBI:57618"/>
        <dbReference type="ChEBI" id="CHEBI:58210"/>
        <dbReference type="ChEBI" id="CHEBI:136991"/>
    </reaction>
    <physiologicalReaction direction="left-to-right" evidence="3">
        <dbReference type="Rhea" id="RHEA:53149"/>
    </physiologicalReaction>
</comment>
<comment type="cofactor">
    <cofactor evidence="2">
        <name>heme</name>
        <dbReference type="ChEBI" id="CHEBI:30413"/>
    </cofactor>
</comment>
<comment type="subcellular location">
    <subcellularLocation>
        <location evidence="8">Endoplasmic reticulum membrane</location>
        <topology evidence="4">Single-pass membrane protein</topology>
    </subcellularLocation>
    <subcellularLocation>
        <location evidence="5">Microsome membrane</location>
        <topology evidence="4">Single-pass membrane protein</topology>
    </subcellularLocation>
</comment>
<comment type="tissue specificity">
    <text evidence="5">Expressed in brain and aorta. In the brain, expressed in the Purkinje cells of the cerebellum, pyramidal neurons in the dentate gyrus of the hippocampus, cortical forebrain neurons and those of brain stem nuclei (at protein level). In addition to neurons, also expressed in cerebral vascular endothelial cells (at protein level). Also expressed in epithelial cells of the choroid plexus (at protein level). Hardly detectable in heart, lung, kidney and spleen.</text>
</comment>
<comment type="similarity">
    <text evidence="7">Belongs to the cytochrome P450 family.</text>
</comment>
<dbReference type="EC" id="1.14.14.-" evidence="3"/>
<dbReference type="EMBL" id="AJ786769">
    <property type="protein sequence ID" value="CAH10751.1"/>
    <property type="molecule type" value="mRNA"/>
</dbReference>
<dbReference type="EMBL" id="AL645473">
    <property type="status" value="NOT_ANNOTATED_CDS"/>
    <property type="molecule type" value="Genomic_DNA"/>
</dbReference>
<dbReference type="EMBL" id="BC113125">
    <property type="protein sequence ID" value="AAI13126.1"/>
    <property type="molecule type" value="mRNA"/>
</dbReference>
<dbReference type="EMBL" id="AK038526">
    <property type="protein sequence ID" value="BAC30028.1"/>
    <property type="molecule type" value="mRNA"/>
</dbReference>
<dbReference type="CCDS" id="CCDS18488.1"/>
<dbReference type="RefSeq" id="NP_001003947.1">
    <property type="nucleotide sequence ID" value="NM_001003947.3"/>
</dbReference>
<dbReference type="SMR" id="Q6A152"/>
<dbReference type="FunCoup" id="Q6A152">
    <property type="interactions" value="94"/>
</dbReference>
<dbReference type="STRING" id="10090.ENSMUSP00000059545"/>
<dbReference type="iPTMnet" id="Q6A152"/>
<dbReference type="PhosphoSitePlus" id="Q6A152"/>
<dbReference type="jPOST" id="Q6A152"/>
<dbReference type="PaxDb" id="10090-ENSMUSP00000059545"/>
<dbReference type="ProteomicsDB" id="285283"/>
<dbReference type="Antibodypedia" id="32842">
    <property type="antibodies" value="205 antibodies from 26 providers"/>
</dbReference>
<dbReference type="DNASU" id="81906"/>
<dbReference type="Ensembl" id="ENSMUST00000051400.8">
    <property type="protein sequence ID" value="ENSMUSP00000059545.8"/>
    <property type="gene ID" value="ENSMUSG00000047155.14"/>
</dbReference>
<dbReference type="GeneID" id="81906"/>
<dbReference type="KEGG" id="mmu:81906"/>
<dbReference type="UCSC" id="uc008uep.1">
    <property type="organism name" value="mouse"/>
</dbReference>
<dbReference type="AGR" id="MGI:1932403"/>
<dbReference type="CTD" id="260293"/>
<dbReference type="MGI" id="MGI:1932403">
    <property type="gene designation" value="Cyp4x1"/>
</dbReference>
<dbReference type="VEuPathDB" id="HostDB:ENSMUSG00000047155"/>
<dbReference type="eggNOG" id="KOG0157">
    <property type="taxonomic scope" value="Eukaryota"/>
</dbReference>
<dbReference type="GeneTree" id="ENSGT00940000160927"/>
<dbReference type="InParanoid" id="Q6A152"/>
<dbReference type="OMA" id="VLHQYTE"/>
<dbReference type="OrthoDB" id="1470350at2759"/>
<dbReference type="PhylomeDB" id="Q6A152"/>
<dbReference type="TreeFam" id="TF105088"/>
<dbReference type="BioGRID-ORCS" id="81906">
    <property type="hits" value="1 hit in 77 CRISPR screens"/>
</dbReference>
<dbReference type="PRO" id="PR:Q6A152"/>
<dbReference type="Proteomes" id="UP000000589">
    <property type="component" value="Chromosome 4"/>
</dbReference>
<dbReference type="RNAct" id="Q6A152">
    <property type="molecule type" value="protein"/>
</dbReference>
<dbReference type="Bgee" id="ENSMUSG00000047155">
    <property type="expression patterns" value="Expressed in facial nucleus and 89 other cell types or tissues"/>
</dbReference>
<dbReference type="ExpressionAtlas" id="Q6A152">
    <property type="expression patterns" value="baseline and differential"/>
</dbReference>
<dbReference type="GO" id="GO:0005789">
    <property type="term" value="C:endoplasmic reticulum membrane"/>
    <property type="evidence" value="ECO:0007669"/>
    <property type="project" value="UniProtKB-SubCell"/>
</dbReference>
<dbReference type="GO" id="GO:0062189">
    <property type="term" value="F:anandamide 14,15 epoxidase activity"/>
    <property type="evidence" value="ECO:0000250"/>
    <property type="project" value="UniProtKB"/>
</dbReference>
<dbReference type="GO" id="GO:0020037">
    <property type="term" value="F:heme binding"/>
    <property type="evidence" value="ECO:0007669"/>
    <property type="project" value="InterPro"/>
</dbReference>
<dbReference type="GO" id="GO:0005506">
    <property type="term" value="F:iron ion binding"/>
    <property type="evidence" value="ECO:0007669"/>
    <property type="project" value="InterPro"/>
</dbReference>
<dbReference type="GO" id="GO:0006629">
    <property type="term" value="P:lipid metabolic process"/>
    <property type="evidence" value="ECO:0007669"/>
    <property type="project" value="UniProtKB-KW"/>
</dbReference>
<dbReference type="CDD" id="cd20678">
    <property type="entry name" value="CYP4B-like"/>
    <property type="match status" value="1"/>
</dbReference>
<dbReference type="FunFam" id="1.10.630.10:FF:000005">
    <property type="entry name" value="cytochrome P450 4F22 isoform X2"/>
    <property type="match status" value="1"/>
</dbReference>
<dbReference type="Gene3D" id="1.10.630.10">
    <property type="entry name" value="Cytochrome P450"/>
    <property type="match status" value="1"/>
</dbReference>
<dbReference type="InterPro" id="IPR001128">
    <property type="entry name" value="Cyt_P450"/>
</dbReference>
<dbReference type="InterPro" id="IPR017972">
    <property type="entry name" value="Cyt_P450_CS"/>
</dbReference>
<dbReference type="InterPro" id="IPR002401">
    <property type="entry name" value="Cyt_P450_E_grp-I"/>
</dbReference>
<dbReference type="InterPro" id="IPR036396">
    <property type="entry name" value="Cyt_P450_sf"/>
</dbReference>
<dbReference type="InterPro" id="IPR050196">
    <property type="entry name" value="Cytochrome_P450_Monoox"/>
</dbReference>
<dbReference type="PANTHER" id="PTHR24291:SF63">
    <property type="entry name" value="CYTOCHROME P450 4X1-RELATED"/>
    <property type="match status" value="1"/>
</dbReference>
<dbReference type="PANTHER" id="PTHR24291">
    <property type="entry name" value="CYTOCHROME P450 FAMILY 4"/>
    <property type="match status" value="1"/>
</dbReference>
<dbReference type="Pfam" id="PF00067">
    <property type="entry name" value="p450"/>
    <property type="match status" value="1"/>
</dbReference>
<dbReference type="PRINTS" id="PR00463">
    <property type="entry name" value="EP450I"/>
</dbReference>
<dbReference type="PRINTS" id="PR00385">
    <property type="entry name" value="P450"/>
</dbReference>
<dbReference type="SUPFAM" id="SSF48264">
    <property type="entry name" value="Cytochrome P450"/>
    <property type="match status" value="1"/>
</dbReference>
<dbReference type="PROSITE" id="PS00086">
    <property type="entry name" value="CYTOCHROME_P450"/>
    <property type="match status" value="1"/>
</dbReference>
<accession>Q6A152</accession>
<accession>Q2HJC6</accession>
<accession>Q8BYS0</accession>
<organism>
    <name type="scientific">Mus musculus</name>
    <name type="common">Mouse</name>
    <dbReference type="NCBI Taxonomy" id="10090"/>
    <lineage>
        <taxon>Eukaryota</taxon>
        <taxon>Metazoa</taxon>
        <taxon>Chordata</taxon>
        <taxon>Craniata</taxon>
        <taxon>Vertebrata</taxon>
        <taxon>Euteleostomi</taxon>
        <taxon>Mammalia</taxon>
        <taxon>Eutheria</taxon>
        <taxon>Euarchontoglires</taxon>
        <taxon>Glires</taxon>
        <taxon>Rodentia</taxon>
        <taxon>Myomorpha</taxon>
        <taxon>Muroidea</taxon>
        <taxon>Muridae</taxon>
        <taxon>Murinae</taxon>
        <taxon>Mus</taxon>
        <taxon>Mus</taxon>
    </lineage>
</organism>
<feature type="chain" id="PRO_0000421683" description="Cytochrome P450 4X1">
    <location>
        <begin position="1"/>
        <end position="507"/>
    </location>
</feature>
<feature type="transmembrane region" description="Helical" evidence="4">
    <location>
        <begin position="14"/>
        <end position="34"/>
    </location>
</feature>
<feature type="binding site" description="axial binding residue" evidence="1">
    <location>
        <position position="452"/>
    </location>
    <ligand>
        <name>heme</name>
        <dbReference type="ChEBI" id="CHEBI:30413"/>
    </ligand>
    <ligandPart>
        <name>Fe</name>
        <dbReference type="ChEBI" id="CHEBI:18248"/>
    </ligandPart>
</feature>
<feature type="sequence conflict" description="In Ref. 4; BAC30028." evidence="7" ref="4">
    <original>R</original>
    <variation>G</variation>
    <location>
        <position position="9"/>
    </location>
</feature>
<feature type="sequence conflict" description="In Ref. 3; AAI13126." evidence="7" ref="3">
    <original>M</original>
    <variation>T</variation>
    <location>
        <position position="110"/>
    </location>
</feature>
<feature type="sequence conflict" description="In Ref. 3; AAI13126." evidence="7" ref="3">
    <original>T</original>
    <variation>A</variation>
    <location>
        <position position="188"/>
    </location>
</feature>
<feature type="sequence conflict" description="In Ref. 3; AAI13126." evidence="7" ref="3">
    <original>L</original>
    <variation>P</variation>
    <location>
        <position position="327"/>
    </location>
</feature>
<evidence type="ECO:0000250" key="1"/>
<evidence type="ECO:0000250" key="2">
    <source>
        <dbReference type="UniProtKB" id="P51869"/>
    </source>
</evidence>
<evidence type="ECO:0000250" key="3">
    <source>
        <dbReference type="UniProtKB" id="Q8N118"/>
    </source>
</evidence>
<evidence type="ECO:0000255" key="4"/>
<evidence type="ECO:0000269" key="5">
    <source>
    </source>
</evidence>
<evidence type="ECO:0000303" key="6">
    <source>
    </source>
</evidence>
<evidence type="ECO:0000305" key="7"/>
<evidence type="ECO:0000305" key="8">
    <source>
    </source>
</evidence>
<evidence type="ECO:0000312" key="9">
    <source>
        <dbReference type="MGI" id="MGI:1932403"/>
    </source>
</evidence>
<name>CP4X1_MOUSE</name>
<gene>
    <name evidence="6 9" type="primary">Cyp4x1</name>
</gene>